<reference key="1">
    <citation type="journal article" date="2006" name="Proc. Natl. Acad. Sci. U.S.A.">
        <title>Comparative genomics of the lactic acid bacteria.</title>
        <authorList>
            <person name="Makarova K.S."/>
            <person name="Slesarev A."/>
            <person name="Wolf Y.I."/>
            <person name="Sorokin A."/>
            <person name="Mirkin B."/>
            <person name="Koonin E.V."/>
            <person name="Pavlov A."/>
            <person name="Pavlova N."/>
            <person name="Karamychev V."/>
            <person name="Polouchine N."/>
            <person name="Shakhova V."/>
            <person name="Grigoriev I."/>
            <person name="Lou Y."/>
            <person name="Rohksar D."/>
            <person name="Lucas S."/>
            <person name="Huang K."/>
            <person name="Goodstein D.M."/>
            <person name="Hawkins T."/>
            <person name="Plengvidhya V."/>
            <person name="Welker D."/>
            <person name="Hughes J."/>
            <person name="Goh Y."/>
            <person name="Benson A."/>
            <person name="Baldwin K."/>
            <person name="Lee J.-H."/>
            <person name="Diaz-Muniz I."/>
            <person name="Dosti B."/>
            <person name="Smeianov V."/>
            <person name="Wechter W."/>
            <person name="Barabote R."/>
            <person name="Lorca G."/>
            <person name="Altermann E."/>
            <person name="Barrangou R."/>
            <person name="Ganesan B."/>
            <person name="Xie Y."/>
            <person name="Rawsthorne H."/>
            <person name="Tamir D."/>
            <person name="Parker C."/>
            <person name="Breidt F."/>
            <person name="Broadbent J.R."/>
            <person name="Hutkins R."/>
            <person name="O'Sullivan D."/>
            <person name="Steele J."/>
            <person name="Unlu G."/>
            <person name="Saier M.H. Jr."/>
            <person name="Klaenhammer T."/>
            <person name="Richardson P."/>
            <person name="Kozyavkin S."/>
            <person name="Weimer B.C."/>
            <person name="Mills D.A."/>
        </authorList>
    </citation>
    <scope>NUCLEOTIDE SEQUENCE [LARGE SCALE GENOMIC DNA]</scope>
    <source>
        <strain>ATCC BAA-331 / PSU-1</strain>
    </source>
</reference>
<evidence type="ECO:0000255" key="1">
    <source>
        <dbReference type="HAMAP-Rule" id="MF_00508"/>
    </source>
</evidence>
<evidence type="ECO:0000305" key="2"/>
<proteinExistence type="inferred from homology"/>
<gene>
    <name evidence="1" type="primary">rpsJ</name>
    <name type="ordered locus">OEOE_0594</name>
</gene>
<organism>
    <name type="scientific">Oenococcus oeni (strain ATCC BAA-331 / PSU-1)</name>
    <dbReference type="NCBI Taxonomy" id="203123"/>
    <lineage>
        <taxon>Bacteria</taxon>
        <taxon>Bacillati</taxon>
        <taxon>Bacillota</taxon>
        <taxon>Bacilli</taxon>
        <taxon>Lactobacillales</taxon>
        <taxon>Lactobacillaceae</taxon>
        <taxon>Oenococcus</taxon>
    </lineage>
</organism>
<comment type="function">
    <text evidence="1">Involved in the binding of tRNA to the ribosomes.</text>
</comment>
<comment type="subunit">
    <text evidence="1">Part of the 30S ribosomal subunit.</text>
</comment>
<comment type="similarity">
    <text evidence="1">Belongs to the universal ribosomal protein uS10 family.</text>
</comment>
<sequence>MAERKIRIRLKAYEYRTIDASAAKIVETAKRTGAQVVGPIPLPTERTIYTILRSPHKHKDSREQFEMRTHKRLIDLVNPTDKTVDSLRKLDLPAGVAIEIKL</sequence>
<protein>
    <recommendedName>
        <fullName evidence="1">Small ribosomal subunit protein uS10</fullName>
    </recommendedName>
    <alternativeName>
        <fullName evidence="2">30S ribosomal protein S10</fullName>
    </alternativeName>
</protein>
<name>RS10_OENOB</name>
<dbReference type="EMBL" id="CP000411">
    <property type="protein sequence ID" value="ABJ56536.1"/>
    <property type="molecule type" value="Genomic_DNA"/>
</dbReference>
<dbReference type="RefSeq" id="WP_002817271.1">
    <property type="nucleotide sequence ID" value="NC_008528.1"/>
</dbReference>
<dbReference type="SMR" id="Q04G86"/>
<dbReference type="STRING" id="203123.OEOE_0594"/>
<dbReference type="GeneID" id="75065416"/>
<dbReference type="KEGG" id="ooe:OEOE_0594"/>
<dbReference type="eggNOG" id="COG0051">
    <property type="taxonomic scope" value="Bacteria"/>
</dbReference>
<dbReference type="HOGENOM" id="CLU_122625_1_3_9"/>
<dbReference type="Proteomes" id="UP000000774">
    <property type="component" value="Chromosome"/>
</dbReference>
<dbReference type="GO" id="GO:1990904">
    <property type="term" value="C:ribonucleoprotein complex"/>
    <property type="evidence" value="ECO:0007669"/>
    <property type="project" value="UniProtKB-KW"/>
</dbReference>
<dbReference type="GO" id="GO:0005840">
    <property type="term" value="C:ribosome"/>
    <property type="evidence" value="ECO:0007669"/>
    <property type="project" value="UniProtKB-KW"/>
</dbReference>
<dbReference type="GO" id="GO:0003735">
    <property type="term" value="F:structural constituent of ribosome"/>
    <property type="evidence" value="ECO:0007669"/>
    <property type="project" value="InterPro"/>
</dbReference>
<dbReference type="GO" id="GO:0000049">
    <property type="term" value="F:tRNA binding"/>
    <property type="evidence" value="ECO:0007669"/>
    <property type="project" value="UniProtKB-UniRule"/>
</dbReference>
<dbReference type="GO" id="GO:0006412">
    <property type="term" value="P:translation"/>
    <property type="evidence" value="ECO:0007669"/>
    <property type="project" value="UniProtKB-UniRule"/>
</dbReference>
<dbReference type="FunFam" id="3.30.70.600:FF:000001">
    <property type="entry name" value="30S ribosomal protein S10"/>
    <property type="match status" value="1"/>
</dbReference>
<dbReference type="Gene3D" id="3.30.70.600">
    <property type="entry name" value="Ribosomal protein S10 domain"/>
    <property type="match status" value="1"/>
</dbReference>
<dbReference type="HAMAP" id="MF_00508">
    <property type="entry name" value="Ribosomal_uS10"/>
    <property type="match status" value="1"/>
</dbReference>
<dbReference type="InterPro" id="IPR001848">
    <property type="entry name" value="Ribosomal_uS10"/>
</dbReference>
<dbReference type="InterPro" id="IPR018268">
    <property type="entry name" value="Ribosomal_uS10_CS"/>
</dbReference>
<dbReference type="InterPro" id="IPR027486">
    <property type="entry name" value="Ribosomal_uS10_dom"/>
</dbReference>
<dbReference type="InterPro" id="IPR036838">
    <property type="entry name" value="Ribosomal_uS10_dom_sf"/>
</dbReference>
<dbReference type="NCBIfam" id="NF001861">
    <property type="entry name" value="PRK00596.1"/>
    <property type="match status" value="1"/>
</dbReference>
<dbReference type="NCBIfam" id="TIGR01049">
    <property type="entry name" value="rpsJ_bact"/>
    <property type="match status" value="1"/>
</dbReference>
<dbReference type="PANTHER" id="PTHR11700">
    <property type="entry name" value="30S RIBOSOMAL PROTEIN S10 FAMILY MEMBER"/>
    <property type="match status" value="1"/>
</dbReference>
<dbReference type="Pfam" id="PF00338">
    <property type="entry name" value="Ribosomal_S10"/>
    <property type="match status" value="1"/>
</dbReference>
<dbReference type="PRINTS" id="PR00971">
    <property type="entry name" value="RIBOSOMALS10"/>
</dbReference>
<dbReference type="SMART" id="SM01403">
    <property type="entry name" value="Ribosomal_S10"/>
    <property type="match status" value="1"/>
</dbReference>
<dbReference type="SUPFAM" id="SSF54999">
    <property type="entry name" value="Ribosomal protein S10"/>
    <property type="match status" value="1"/>
</dbReference>
<dbReference type="PROSITE" id="PS00361">
    <property type="entry name" value="RIBOSOMAL_S10"/>
    <property type="match status" value="1"/>
</dbReference>
<feature type="chain" id="PRO_1000015072" description="Small ribosomal subunit protein uS10">
    <location>
        <begin position="1"/>
        <end position="102"/>
    </location>
</feature>
<accession>Q04G86</accession>
<keyword id="KW-1185">Reference proteome</keyword>
<keyword id="KW-0687">Ribonucleoprotein</keyword>
<keyword id="KW-0689">Ribosomal protein</keyword>